<protein>
    <recommendedName>
        <fullName evidence="1">UDP-3-O-acyl-N-acetylglucosamine deacetylase</fullName>
        <shortName evidence="1">UDP-3-O-acyl-GlcNAc deacetylase</shortName>
        <ecNumber evidence="1">3.5.1.108</ecNumber>
    </recommendedName>
    <alternativeName>
        <fullName evidence="1">UDP-3-O-[R-3-hydroxymyristoyl]-N-acetylglucosamine deacetylase</fullName>
    </alternativeName>
</protein>
<keyword id="KW-0378">Hydrolase</keyword>
<keyword id="KW-0441">Lipid A biosynthesis</keyword>
<keyword id="KW-0444">Lipid biosynthesis</keyword>
<keyword id="KW-0443">Lipid metabolism</keyword>
<keyword id="KW-0479">Metal-binding</keyword>
<keyword id="KW-0862">Zinc</keyword>
<name>LPXC_ECOSM</name>
<gene>
    <name evidence="1" type="primary">lpxC</name>
    <name type="ordered locus">EcSMS35_0101</name>
</gene>
<dbReference type="EC" id="3.5.1.108" evidence="1"/>
<dbReference type="EMBL" id="CP000970">
    <property type="protein sequence ID" value="ACB17071.1"/>
    <property type="molecule type" value="Genomic_DNA"/>
</dbReference>
<dbReference type="RefSeq" id="WP_000595482.1">
    <property type="nucleotide sequence ID" value="NC_010498.1"/>
</dbReference>
<dbReference type="SMR" id="B1LG33"/>
<dbReference type="GeneID" id="93777338"/>
<dbReference type="KEGG" id="ecm:EcSMS35_0101"/>
<dbReference type="HOGENOM" id="CLU_046528_1_0_6"/>
<dbReference type="UniPathway" id="UPA00359">
    <property type="reaction ID" value="UER00478"/>
</dbReference>
<dbReference type="Proteomes" id="UP000007011">
    <property type="component" value="Chromosome"/>
</dbReference>
<dbReference type="GO" id="GO:0016020">
    <property type="term" value="C:membrane"/>
    <property type="evidence" value="ECO:0007669"/>
    <property type="project" value="GOC"/>
</dbReference>
<dbReference type="GO" id="GO:0046872">
    <property type="term" value="F:metal ion binding"/>
    <property type="evidence" value="ECO:0007669"/>
    <property type="project" value="UniProtKB-KW"/>
</dbReference>
<dbReference type="GO" id="GO:0103117">
    <property type="term" value="F:UDP-3-O-acyl-N-acetylglucosamine deacetylase activity"/>
    <property type="evidence" value="ECO:0007669"/>
    <property type="project" value="UniProtKB-UniRule"/>
</dbReference>
<dbReference type="GO" id="GO:0009245">
    <property type="term" value="P:lipid A biosynthetic process"/>
    <property type="evidence" value="ECO:0007669"/>
    <property type="project" value="UniProtKB-UniRule"/>
</dbReference>
<dbReference type="FunFam" id="3.30.1700.10:FF:000001">
    <property type="entry name" value="UDP-3-O-acyl-N-acetylglucosamine deacetylase"/>
    <property type="match status" value="1"/>
</dbReference>
<dbReference type="FunFam" id="3.30.230.20:FF:000001">
    <property type="entry name" value="UDP-3-O-acyl-N-acetylglucosamine deacetylase"/>
    <property type="match status" value="1"/>
</dbReference>
<dbReference type="Gene3D" id="3.30.230.20">
    <property type="entry name" value="lpxc deacetylase, domain 1"/>
    <property type="match status" value="1"/>
</dbReference>
<dbReference type="Gene3D" id="3.30.1700.10">
    <property type="entry name" value="lpxc deacetylase, domain 2"/>
    <property type="match status" value="1"/>
</dbReference>
<dbReference type="HAMAP" id="MF_00388">
    <property type="entry name" value="LpxC"/>
    <property type="match status" value="1"/>
</dbReference>
<dbReference type="InterPro" id="IPR020568">
    <property type="entry name" value="Ribosomal_Su5_D2-typ_SF"/>
</dbReference>
<dbReference type="InterPro" id="IPR004463">
    <property type="entry name" value="UDP-acyl_GlcNac_deAcase"/>
</dbReference>
<dbReference type="InterPro" id="IPR011334">
    <property type="entry name" value="UDP-acyl_GlcNac_deAcase_C"/>
</dbReference>
<dbReference type="InterPro" id="IPR015870">
    <property type="entry name" value="UDP-acyl_N-AcGlcN_deAcase_N"/>
</dbReference>
<dbReference type="NCBIfam" id="TIGR00325">
    <property type="entry name" value="lpxC"/>
    <property type="match status" value="1"/>
</dbReference>
<dbReference type="PANTHER" id="PTHR33694">
    <property type="entry name" value="UDP-3-O-ACYL-N-ACETYLGLUCOSAMINE DEACETYLASE 1, MITOCHONDRIAL-RELATED"/>
    <property type="match status" value="1"/>
</dbReference>
<dbReference type="PANTHER" id="PTHR33694:SF1">
    <property type="entry name" value="UDP-3-O-ACYL-N-ACETYLGLUCOSAMINE DEACETYLASE 1, MITOCHONDRIAL-RELATED"/>
    <property type="match status" value="1"/>
</dbReference>
<dbReference type="Pfam" id="PF03331">
    <property type="entry name" value="LpxC"/>
    <property type="match status" value="1"/>
</dbReference>
<dbReference type="SUPFAM" id="SSF54211">
    <property type="entry name" value="Ribosomal protein S5 domain 2-like"/>
    <property type="match status" value="2"/>
</dbReference>
<proteinExistence type="inferred from homology"/>
<sequence length="305" mass="33956">MIKQRTLKRIVQATGVGLHTGKKVTLTLRPAPANTGVIYRRTDLNPPVDFPADAKSVRDTMLCTCLVNEHDVRISTVEHLNAALAGLGIDNIVIEVNAPEIPIMDGSAAPFVYLLLDAGIDELNCAKKFVRIKETVRVEDGDKWAEFKPYNGFSLDFTIDFNHPAIDSSNQRYAMNFSADAFMRQISRARTFGFMRDIEYLQSRGLCLGGSFDCAIVVDDYRVLNEDGLRFEDEFVRHKMLDAIGDLFMCGHNIIGAFTAYKSGHALNNKLLQAVLAKQEAWEYVTFQDDAELPLAFKAPSAVLA</sequence>
<accession>B1LG33</accession>
<organism>
    <name type="scientific">Escherichia coli (strain SMS-3-5 / SECEC)</name>
    <dbReference type="NCBI Taxonomy" id="439855"/>
    <lineage>
        <taxon>Bacteria</taxon>
        <taxon>Pseudomonadati</taxon>
        <taxon>Pseudomonadota</taxon>
        <taxon>Gammaproteobacteria</taxon>
        <taxon>Enterobacterales</taxon>
        <taxon>Enterobacteriaceae</taxon>
        <taxon>Escherichia</taxon>
    </lineage>
</organism>
<evidence type="ECO:0000255" key="1">
    <source>
        <dbReference type="HAMAP-Rule" id="MF_00388"/>
    </source>
</evidence>
<comment type="function">
    <text evidence="1">Catalyzes the hydrolysis of UDP-3-O-myristoyl-N-acetylglucosamine to form UDP-3-O-myristoylglucosamine and acetate, the committed step in lipid A biosynthesis.</text>
</comment>
<comment type="catalytic activity">
    <reaction evidence="1">
        <text>a UDP-3-O-[(3R)-3-hydroxyacyl]-N-acetyl-alpha-D-glucosamine + H2O = a UDP-3-O-[(3R)-3-hydroxyacyl]-alpha-D-glucosamine + acetate</text>
        <dbReference type="Rhea" id="RHEA:67816"/>
        <dbReference type="ChEBI" id="CHEBI:15377"/>
        <dbReference type="ChEBI" id="CHEBI:30089"/>
        <dbReference type="ChEBI" id="CHEBI:137740"/>
        <dbReference type="ChEBI" id="CHEBI:173225"/>
        <dbReference type="EC" id="3.5.1.108"/>
    </reaction>
</comment>
<comment type="cofactor">
    <cofactor evidence="1">
        <name>Zn(2+)</name>
        <dbReference type="ChEBI" id="CHEBI:29105"/>
    </cofactor>
</comment>
<comment type="pathway">
    <text evidence="1">Glycolipid biosynthesis; lipid IV(A) biosynthesis; lipid IV(A) from (3R)-3-hydroxytetradecanoyl-[acyl-carrier-protein] and UDP-N-acetyl-alpha-D-glucosamine: step 2/6.</text>
</comment>
<comment type="similarity">
    <text evidence="1">Belongs to the LpxC family.</text>
</comment>
<feature type="chain" id="PRO_1000122786" description="UDP-3-O-acyl-N-acetylglucosamine deacetylase">
    <location>
        <begin position="1"/>
        <end position="305"/>
    </location>
</feature>
<feature type="active site" description="Proton donor" evidence="1">
    <location>
        <position position="265"/>
    </location>
</feature>
<feature type="binding site" evidence="1">
    <location>
        <position position="79"/>
    </location>
    <ligand>
        <name>Zn(2+)</name>
        <dbReference type="ChEBI" id="CHEBI:29105"/>
    </ligand>
</feature>
<feature type="binding site" evidence="1">
    <location>
        <position position="238"/>
    </location>
    <ligand>
        <name>Zn(2+)</name>
        <dbReference type="ChEBI" id="CHEBI:29105"/>
    </ligand>
</feature>
<feature type="binding site" evidence="1">
    <location>
        <position position="242"/>
    </location>
    <ligand>
        <name>Zn(2+)</name>
        <dbReference type="ChEBI" id="CHEBI:29105"/>
    </ligand>
</feature>
<reference key="1">
    <citation type="journal article" date="2008" name="J. Bacteriol.">
        <title>Insights into the environmental resistance gene pool from the genome sequence of the multidrug-resistant environmental isolate Escherichia coli SMS-3-5.</title>
        <authorList>
            <person name="Fricke W.F."/>
            <person name="Wright M.S."/>
            <person name="Lindell A.H."/>
            <person name="Harkins D.M."/>
            <person name="Baker-Austin C."/>
            <person name="Ravel J."/>
            <person name="Stepanauskas R."/>
        </authorList>
    </citation>
    <scope>NUCLEOTIDE SEQUENCE [LARGE SCALE GENOMIC DNA]</scope>
    <source>
        <strain>SMS-3-5 / SECEC</strain>
    </source>
</reference>